<name>NUOCD_SALTY</name>
<comment type="function">
    <text evidence="2">NDH-1 shuttles electrons from NADH, via FMN and iron-sulfur (Fe-S) centers, to quinones in the respiratory chain. The immediate electron acceptor for the enzyme in this species is believed to be ubiquinone. Couples the redox reaction to proton translocation (for every two electrons transferred, four hydrogen ions are translocated across the cytoplasmic membrane), and thus conserves the redox energy in a proton gradient.</text>
</comment>
<comment type="catalytic activity">
    <reaction evidence="2">
        <text>a quinone + NADH + 5 H(+)(in) = a quinol + NAD(+) + 4 H(+)(out)</text>
        <dbReference type="Rhea" id="RHEA:57888"/>
        <dbReference type="ChEBI" id="CHEBI:15378"/>
        <dbReference type="ChEBI" id="CHEBI:24646"/>
        <dbReference type="ChEBI" id="CHEBI:57540"/>
        <dbReference type="ChEBI" id="CHEBI:57945"/>
        <dbReference type="ChEBI" id="CHEBI:132124"/>
    </reaction>
</comment>
<comment type="subunit">
    <text evidence="2">NDH-1 is composed of 13 different subunits. Subunits NuoB, CD, E, F, and G constitute the peripheral sector of the complex.</text>
</comment>
<comment type="subcellular location">
    <subcellularLocation>
        <location evidence="2">Cell inner membrane</location>
        <topology evidence="2">Peripheral membrane protein</topology>
        <orientation evidence="2">Cytoplasmic side</orientation>
    </subcellularLocation>
</comment>
<comment type="similarity">
    <text evidence="2">In the N-terminal section; belongs to the complex I 30 kDa subunit family.</text>
</comment>
<comment type="similarity">
    <text evidence="2">In the C-terminal section; belongs to the complex I 49 kDa subunit family.</text>
</comment>
<keyword id="KW-0997">Cell inner membrane</keyword>
<keyword id="KW-1003">Cell membrane</keyword>
<keyword id="KW-0472">Membrane</keyword>
<keyword id="KW-0511">Multifunctional enzyme</keyword>
<keyword id="KW-0520">NAD</keyword>
<keyword id="KW-0874">Quinone</keyword>
<keyword id="KW-1185">Reference proteome</keyword>
<keyword id="KW-1278">Translocase</keyword>
<keyword id="KW-0813">Transport</keyword>
<keyword id="KW-0830">Ubiquinone</keyword>
<gene>
    <name evidence="2" type="primary">nuoC</name>
    <name evidence="2" type="synonym">nuoCD</name>
    <name evidence="2" type="synonym">nuoD</name>
    <name type="ordered locus">STM2326</name>
</gene>
<proteinExistence type="inferred from homology"/>
<organism>
    <name type="scientific">Salmonella typhimurium (strain LT2 / SGSC1412 / ATCC 700720)</name>
    <dbReference type="NCBI Taxonomy" id="99287"/>
    <lineage>
        <taxon>Bacteria</taxon>
        <taxon>Pseudomonadati</taxon>
        <taxon>Pseudomonadota</taxon>
        <taxon>Gammaproteobacteria</taxon>
        <taxon>Enterobacterales</taxon>
        <taxon>Enterobacteriaceae</taxon>
        <taxon>Salmonella</taxon>
    </lineage>
</organism>
<feature type="initiator methionine" description="Removed" evidence="1">
    <location>
        <position position="1"/>
    </location>
</feature>
<feature type="chain" id="PRO_0000118680" description="NADH-quinone oxidoreductase subunit C/D">
    <location>
        <begin position="2"/>
        <end position="596"/>
    </location>
</feature>
<feature type="region of interest" description="NADH dehydrogenase I subunit C" evidence="2">
    <location>
        <begin position="2"/>
        <end position="186"/>
    </location>
</feature>
<feature type="region of interest" description="NADH dehydrogenase I subunit D" evidence="2">
    <location>
        <begin position="210"/>
        <end position="596"/>
    </location>
</feature>
<accession>P0A1Y6</accession>
<accession>P33902</accession>
<reference key="1">
    <citation type="journal article" date="2001" name="Nature">
        <title>Complete genome sequence of Salmonella enterica serovar Typhimurium LT2.</title>
        <authorList>
            <person name="McClelland M."/>
            <person name="Sanderson K.E."/>
            <person name="Spieth J."/>
            <person name="Clifton S.W."/>
            <person name="Latreille P."/>
            <person name="Courtney L."/>
            <person name="Porwollik S."/>
            <person name="Ali J."/>
            <person name="Dante M."/>
            <person name="Du F."/>
            <person name="Hou S."/>
            <person name="Layman D."/>
            <person name="Leonard S."/>
            <person name="Nguyen C."/>
            <person name="Scott K."/>
            <person name="Holmes A."/>
            <person name="Grewal N."/>
            <person name="Mulvaney E."/>
            <person name="Ryan E."/>
            <person name="Sun H."/>
            <person name="Florea L."/>
            <person name="Miller W."/>
            <person name="Stoneking T."/>
            <person name="Nhan M."/>
            <person name="Waterston R."/>
            <person name="Wilson R.K."/>
        </authorList>
    </citation>
    <scope>NUCLEOTIDE SEQUENCE [LARGE SCALE GENOMIC DNA]</scope>
    <source>
        <strain>LT2 / SGSC1412 / ATCC 700720</strain>
    </source>
</reference>
<reference key="2">
    <citation type="journal article" date="1993" name="Proc. Natl. Acad. Sci. U.S.A.">
        <title>Mutants defective in the energy-conserving NADH dehydrogenase of Salmonella typhimurium identified by a decrease in energy-dependent proteolysis after carbon starvation.</title>
        <authorList>
            <person name="Archer C.D."/>
            <person name="Wang X."/>
            <person name="Elliott T."/>
        </authorList>
    </citation>
    <scope>NUCLEOTIDE SEQUENCE [GENOMIC DNA] OF 516-596</scope>
</reference>
<dbReference type="EC" id="7.1.1.-" evidence="2"/>
<dbReference type="EMBL" id="AE006468">
    <property type="protein sequence ID" value="AAL21227.1"/>
    <property type="molecule type" value="Genomic_DNA"/>
</dbReference>
<dbReference type="EMBL" id="L22504">
    <property type="protein sequence ID" value="AAA16060.1"/>
    <property type="molecule type" value="Unassigned_DNA"/>
</dbReference>
<dbReference type="RefSeq" id="NP_461268.1">
    <property type="nucleotide sequence ID" value="NC_003197.2"/>
</dbReference>
<dbReference type="SMR" id="P0A1Y6"/>
<dbReference type="STRING" id="99287.STM2326"/>
<dbReference type="PaxDb" id="99287-STM2326"/>
<dbReference type="DNASU" id="1253848"/>
<dbReference type="GeneID" id="1253848"/>
<dbReference type="KEGG" id="stm:STM2326"/>
<dbReference type="PATRIC" id="fig|99287.12.peg.2463"/>
<dbReference type="HOGENOM" id="CLU_015134_3_2_6"/>
<dbReference type="PhylomeDB" id="P0A1Y6"/>
<dbReference type="Proteomes" id="UP000001014">
    <property type="component" value="Chromosome"/>
</dbReference>
<dbReference type="GO" id="GO:0030964">
    <property type="term" value="C:NADH dehydrogenase complex"/>
    <property type="evidence" value="ECO:0007669"/>
    <property type="project" value="InterPro"/>
</dbReference>
<dbReference type="GO" id="GO:0005886">
    <property type="term" value="C:plasma membrane"/>
    <property type="evidence" value="ECO:0000318"/>
    <property type="project" value="GO_Central"/>
</dbReference>
<dbReference type="GO" id="GO:0051287">
    <property type="term" value="F:NAD binding"/>
    <property type="evidence" value="ECO:0007669"/>
    <property type="project" value="InterPro"/>
</dbReference>
<dbReference type="GO" id="GO:0008137">
    <property type="term" value="F:NADH dehydrogenase (ubiquinone) activity"/>
    <property type="evidence" value="ECO:0007669"/>
    <property type="project" value="InterPro"/>
</dbReference>
<dbReference type="GO" id="GO:0050136">
    <property type="term" value="F:NADH:ubiquinone reductase (non-electrogenic) activity"/>
    <property type="evidence" value="ECO:0007669"/>
    <property type="project" value="UniProtKB-UniRule"/>
</dbReference>
<dbReference type="GO" id="GO:0048038">
    <property type="term" value="F:quinone binding"/>
    <property type="evidence" value="ECO:0007669"/>
    <property type="project" value="UniProtKB-KW"/>
</dbReference>
<dbReference type="FunFam" id="1.10.645.10:FF:000001">
    <property type="entry name" value="NADH-quinone oxidoreductase subunit C/D"/>
    <property type="match status" value="1"/>
</dbReference>
<dbReference type="FunFam" id="3.30.460.80:FF:000001">
    <property type="entry name" value="NADH-quinone oxidoreductase subunit C/D"/>
    <property type="match status" value="1"/>
</dbReference>
<dbReference type="Gene3D" id="1.10.645.10">
    <property type="entry name" value="Cytochrome-c3 Hydrogenase, chain B"/>
    <property type="match status" value="1"/>
</dbReference>
<dbReference type="Gene3D" id="3.30.460.80">
    <property type="entry name" value="NADH:ubiquinone oxidoreductase, 30kDa subunit"/>
    <property type="match status" value="1"/>
</dbReference>
<dbReference type="HAMAP" id="MF_01359">
    <property type="entry name" value="NDH1_NuoCD_1"/>
    <property type="match status" value="1"/>
</dbReference>
<dbReference type="HAMAP" id="MF_01358">
    <property type="entry name" value="NDH1_NuoD"/>
    <property type="match status" value="1"/>
</dbReference>
<dbReference type="InterPro" id="IPR010218">
    <property type="entry name" value="NADH_DH_suC"/>
</dbReference>
<dbReference type="InterPro" id="IPR023062">
    <property type="entry name" value="NADH_DH_suCD"/>
</dbReference>
<dbReference type="InterPro" id="IPR001135">
    <property type="entry name" value="NADH_Q_OxRdtase_suD"/>
</dbReference>
<dbReference type="InterPro" id="IPR037232">
    <property type="entry name" value="NADH_quin_OxRdtase_su_C/D-like"/>
</dbReference>
<dbReference type="InterPro" id="IPR001268">
    <property type="entry name" value="NADH_UbQ_OxRdtase_30kDa_su"/>
</dbReference>
<dbReference type="InterPro" id="IPR014029">
    <property type="entry name" value="NADH_UbQ_OxRdtase_49kDa_CS"/>
</dbReference>
<dbReference type="InterPro" id="IPR022885">
    <property type="entry name" value="NDH1_su_D/H"/>
</dbReference>
<dbReference type="InterPro" id="IPR029014">
    <property type="entry name" value="NiFe-Hase_large"/>
</dbReference>
<dbReference type="NCBIfam" id="TIGR01961">
    <property type="entry name" value="NuoC_fam"/>
    <property type="match status" value="1"/>
</dbReference>
<dbReference type="NCBIfam" id="TIGR01962">
    <property type="entry name" value="NuoD"/>
    <property type="match status" value="1"/>
</dbReference>
<dbReference type="NCBIfam" id="NF004739">
    <property type="entry name" value="PRK06075.1"/>
    <property type="match status" value="1"/>
</dbReference>
<dbReference type="NCBIfam" id="NF008728">
    <property type="entry name" value="PRK11742.1"/>
    <property type="match status" value="1"/>
</dbReference>
<dbReference type="PANTHER" id="PTHR11993:SF45">
    <property type="entry name" value="NADH-QUINONE OXIDOREDUCTASE SUBUNIT C_D"/>
    <property type="match status" value="1"/>
</dbReference>
<dbReference type="PANTHER" id="PTHR11993">
    <property type="entry name" value="NADH-UBIQUINONE OXIDOREDUCTASE 49 KDA SUBUNIT"/>
    <property type="match status" value="1"/>
</dbReference>
<dbReference type="Pfam" id="PF00329">
    <property type="entry name" value="Complex1_30kDa"/>
    <property type="match status" value="1"/>
</dbReference>
<dbReference type="Pfam" id="PF00346">
    <property type="entry name" value="Complex1_49kDa"/>
    <property type="match status" value="1"/>
</dbReference>
<dbReference type="SUPFAM" id="SSF56762">
    <property type="entry name" value="HydB/Nqo4-like"/>
    <property type="match status" value="1"/>
</dbReference>
<dbReference type="SUPFAM" id="SSF143243">
    <property type="entry name" value="Nqo5-like"/>
    <property type="match status" value="1"/>
</dbReference>
<dbReference type="PROSITE" id="PS00535">
    <property type="entry name" value="COMPLEX1_49K"/>
    <property type="match status" value="1"/>
</dbReference>
<protein>
    <recommendedName>
        <fullName evidence="2">NADH-quinone oxidoreductase subunit C/D</fullName>
        <ecNumber evidence="2">7.1.1.-</ecNumber>
    </recommendedName>
    <alternativeName>
        <fullName evidence="2">NADH dehydrogenase I subunit C/D</fullName>
    </alternativeName>
    <alternativeName>
        <fullName evidence="2">NDH-1 subunit C/D</fullName>
    </alternativeName>
</protein>
<evidence type="ECO:0000250" key="1"/>
<evidence type="ECO:0000255" key="2">
    <source>
        <dbReference type="HAMAP-Rule" id="MF_01359"/>
    </source>
</evidence>
<sequence length="596" mass="68402">MTDLTAQDAAWSTRDHLDDPVIGELRNRFGPDAFTVQATRTGIPVVWVKREQLLEVGDFLKKLPKPYVMLFDLHGMDERLRTHRDGLPAADFSVFYHLISIERNRDIMLKVALSENDLRVPTFTKLFPNANWYERETWEMFGIDIEGHPHLTRIMMPQTWEGHPLRKDYPARATEFDPFELTKAKQDLEMEALTFKPEDWGMKRGTDNEDFMFLNLGPNHPSAHGAFRIILQLDGEEIVDCVPDIGYHHRGAEKMGERQSWHSYIPYTDRIEYLGGCVNEMPYVLAVEKLAGITVPDRVNVIRVMLSELFRINSHLLYISTFIQDVGAMTPVFFAFTDRQKIYDLVEAITGFRMHPAWFRIGGVAHDLPRGWDRLLREFLEWMPKRLDSYEKAALRNTILKGRSQGVAAYGAKEALEWGTTGAGLRATGIDFDVRKWRPYSGYENFDFEVPVGGGVSDCYTRVMLKVEELRQSLRILQQCLDNMPEGPFKADHPLTTPPPKERTLQHIETLITHFLQVSWGPVMPAQESFQMVEATKGINSYYLTSDGSTMSYRTRVRTPSFAHLQQIPSAIRGSLVSDLIVYLGSIDFVMSDVDR</sequence>